<accession>P37332</accession>
<accession>Q13FT3</accession>
<comment type="function">
    <text>This protein seems to be a 2Fe-2S ferredoxin.</text>
</comment>
<comment type="biophysicochemical properties">
    <redoxPotential>
        <text>E(0) is -157 mV.</text>
    </redoxPotential>
</comment>
<comment type="subunit">
    <text>This dioxygenase system consists of four proteins: the two subunits of the hydroxylase component (BphA and BphE), a ferredoxin (BphF) and a ferredoxin reductase (BphG).</text>
</comment>
<comment type="similarity">
    <text evidence="2">Belongs to the bacterial ring-hydroxylating dioxygenase ferredoxin component family.</text>
</comment>
<dbReference type="EMBL" id="M86348">
    <property type="protein sequence ID" value="AAB63428.1"/>
    <property type="molecule type" value="Genomic_DNA"/>
</dbReference>
<dbReference type="EMBL" id="CP000272">
    <property type="protein sequence ID" value="ABE37056.1"/>
    <property type="molecule type" value="Genomic_DNA"/>
</dbReference>
<dbReference type="PIR" id="E41858">
    <property type="entry name" value="E41858"/>
</dbReference>
<dbReference type="RefSeq" id="WP_011494297.1">
    <property type="nucleotide sequence ID" value="NZ_CP008761.1"/>
</dbReference>
<dbReference type="PDB" id="1FQT">
    <property type="method" value="X-ray"/>
    <property type="resolution" value="1.60 A"/>
    <property type="chains" value="A/B=1-109"/>
</dbReference>
<dbReference type="PDBsum" id="1FQT"/>
<dbReference type="SMR" id="P37332"/>
<dbReference type="STRING" id="266265.Bxe_C1194"/>
<dbReference type="KEGG" id="bxb:DR64_8611"/>
<dbReference type="KEGG" id="bxe:Bxe_C1194"/>
<dbReference type="eggNOG" id="COG2146">
    <property type="taxonomic scope" value="Bacteria"/>
</dbReference>
<dbReference type="OrthoDB" id="9800167at2"/>
<dbReference type="EvolutionaryTrace" id="P37332"/>
<dbReference type="Proteomes" id="UP000001817">
    <property type="component" value="Chromosome 3"/>
</dbReference>
<dbReference type="GO" id="GO:0051537">
    <property type="term" value="F:2 iron, 2 sulfur cluster binding"/>
    <property type="evidence" value="ECO:0007669"/>
    <property type="project" value="UniProtKB-KW"/>
</dbReference>
<dbReference type="GO" id="GO:0046872">
    <property type="term" value="F:metal ion binding"/>
    <property type="evidence" value="ECO:0007669"/>
    <property type="project" value="UniProtKB-KW"/>
</dbReference>
<dbReference type="GO" id="GO:0009056">
    <property type="term" value="P:catabolic process"/>
    <property type="evidence" value="ECO:0007669"/>
    <property type="project" value="UniProtKB-KW"/>
</dbReference>
<dbReference type="CDD" id="cd03528">
    <property type="entry name" value="Rieske_RO_ferredoxin"/>
    <property type="match status" value="1"/>
</dbReference>
<dbReference type="Gene3D" id="2.102.10.10">
    <property type="entry name" value="Rieske [2Fe-2S] iron-sulphur domain"/>
    <property type="match status" value="1"/>
</dbReference>
<dbReference type="InterPro" id="IPR017941">
    <property type="entry name" value="Rieske_2Fe-2S"/>
</dbReference>
<dbReference type="InterPro" id="IPR036922">
    <property type="entry name" value="Rieske_2Fe-2S_sf"/>
</dbReference>
<dbReference type="PANTHER" id="PTHR21496:SF23">
    <property type="entry name" value="3-PHENYLPROPIONATE_CINNAMIC ACID DIOXYGENASE FERREDOXIN SUBUNIT"/>
    <property type="match status" value="1"/>
</dbReference>
<dbReference type="PANTHER" id="PTHR21496">
    <property type="entry name" value="FERREDOXIN-RELATED"/>
    <property type="match status" value="1"/>
</dbReference>
<dbReference type="Pfam" id="PF00355">
    <property type="entry name" value="Rieske"/>
    <property type="match status" value="1"/>
</dbReference>
<dbReference type="SUPFAM" id="SSF50022">
    <property type="entry name" value="ISP domain"/>
    <property type="match status" value="1"/>
</dbReference>
<dbReference type="PROSITE" id="PS51296">
    <property type="entry name" value="RIESKE"/>
    <property type="match status" value="1"/>
</dbReference>
<keyword id="KW-0001">2Fe-2S</keyword>
<keyword id="KW-0002">3D-structure</keyword>
<keyword id="KW-0058">Aromatic hydrocarbons catabolism</keyword>
<keyword id="KW-0249">Electron transport</keyword>
<keyword id="KW-0408">Iron</keyword>
<keyword id="KW-0411">Iron-sulfur</keyword>
<keyword id="KW-0479">Metal-binding</keyword>
<keyword id="KW-1185">Reference proteome</keyword>
<keyword id="KW-0813">Transport</keyword>
<gene>
    <name type="primary">bphF</name>
    <name type="ordered locus">Bxeno_C1128</name>
    <name type="ORF">Bxe_C1194</name>
</gene>
<organism>
    <name type="scientific">Paraburkholderia xenovorans (strain LB400)</name>
    <dbReference type="NCBI Taxonomy" id="266265"/>
    <lineage>
        <taxon>Bacteria</taxon>
        <taxon>Pseudomonadati</taxon>
        <taxon>Pseudomonadota</taxon>
        <taxon>Betaproteobacteria</taxon>
        <taxon>Burkholderiales</taxon>
        <taxon>Burkholderiaceae</taxon>
        <taxon>Paraburkholderia</taxon>
    </lineage>
</organism>
<proteinExistence type="evidence at protein level"/>
<name>BPHF_PARXL</name>
<protein>
    <recommendedName>
        <fullName>Biphenyl dioxygenase system ferredoxin subunit</fullName>
    </recommendedName>
</protein>
<evidence type="ECO:0000255" key="1">
    <source>
        <dbReference type="PROSITE-ProRule" id="PRU00628"/>
    </source>
</evidence>
<evidence type="ECO:0000305" key="2"/>
<evidence type="ECO:0007829" key="3">
    <source>
        <dbReference type="PDB" id="1FQT"/>
    </source>
</evidence>
<feature type="chain" id="PRO_0000201686" description="Biphenyl dioxygenase system ferredoxin subunit">
    <location>
        <begin position="1"/>
        <end position="109"/>
    </location>
</feature>
<feature type="domain" description="Rieske" evidence="1">
    <location>
        <begin position="4"/>
        <end position="100"/>
    </location>
</feature>
<feature type="binding site">
    <location>
        <position position="43"/>
    </location>
    <ligand>
        <name>[2Fe-2S] cluster</name>
        <dbReference type="ChEBI" id="CHEBI:190135"/>
    </ligand>
</feature>
<feature type="binding site">
    <location>
        <position position="45"/>
    </location>
    <ligand>
        <name>[2Fe-2S] cluster</name>
        <dbReference type="ChEBI" id="CHEBI:190135"/>
    </ligand>
</feature>
<feature type="binding site">
    <location>
        <position position="63"/>
    </location>
    <ligand>
        <name>[2Fe-2S] cluster</name>
        <dbReference type="ChEBI" id="CHEBI:190135"/>
    </ligand>
</feature>
<feature type="binding site">
    <location>
        <position position="66"/>
    </location>
    <ligand>
        <name>[2Fe-2S] cluster</name>
        <dbReference type="ChEBI" id="CHEBI:190135"/>
    </ligand>
</feature>
<feature type="strand" evidence="3">
    <location>
        <begin position="4"/>
        <end position="8"/>
    </location>
</feature>
<feature type="helix" evidence="3">
    <location>
        <begin position="9"/>
        <end position="11"/>
    </location>
</feature>
<feature type="strand" evidence="3">
    <location>
        <begin position="17"/>
        <end position="22"/>
    </location>
</feature>
<feature type="strand" evidence="3">
    <location>
        <begin position="25"/>
        <end position="32"/>
    </location>
</feature>
<feature type="strand" evidence="3">
    <location>
        <begin position="35"/>
        <end position="42"/>
    </location>
</feature>
<feature type="strand" evidence="3">
    <location>
        <begin position="49"/>
        <end position="51"/>
    </location>
</feature>
<feature type="strand" evidence="3">
    <location>
        <begin position="60"/>
        <end position="62"/>
    </location>
</feature>
<feature type="turn" evidence="3">
    <location>
        <begin position="64"/>
        <end position="66"/>
    </location>
</feature>
<feature type="strand" evidence="3">
    <location>
        <begin position="69"/>
        <end position="71"/>
    </location>
</feature>
<feature type="turn" evidence="3">
    <location>
        <begin position="72"/>
        <end position="74"/>
    </location>
</feature>
<feature type="strand" evidence="3">
    <location>
        <begin position="77"/>
        <end position="81"/>
    </location>
</feature>
<feature type="strand" evidence="3">
    <location>
        <begin position="91"/>
        <end position="94"/>
    </location>
</feature>
<feature type="strand" evidence="3">
    <location>
        <begin position="97"/>
        <end position="100"/>
    </location>
</feature>
<sequence>MKFTRVCDRRDVPEGEALKVESGGTSVAIFNVDGELFATQDRCTHGDWSLSDGGYLEGDVVECSLHMGKFCVRTGKVKSPPPCEALKIFPIRIEDNDVLVDFEAGYLAP</sequence>
<reference key="1">
    <citation type="journal article" date="1992" name="J. Bacteriol.">
        <title>Nucleotide sequencing and transcriptional mapping of the genes encoding biphenyl dioxygenase, a multicomponent polychlorinated-biphenyl-degrading enzyme in Pseudomonas strain LB400.</title>
        <authorList>
            <person name="Erickson B.D."/>
            <person name="Mondello F.J."/>
        </authorList>
    </citation>
    <scope>NUCLEOTIDE SEQUENCE [GENOMIC DNA]</scope>
</reference>
<reference key="2">
    <citation type="submission" date="1995-07" db="EMBL/GenBank/DDBJ databases">
        <authorList>
            <person name="Erickson B.D."/>
            <person name="Mondello F.J."/>
        </authorList>
    </citation>
    <scope>SEQUENCE REVISION</scope>
</reference>
<reference key="3">
    <citation type="journal article" date="2006" name="Proc. Natl. Acad. Sci. U.S.A.">
        <title>Burkholderia xenovorans LB400 harbors a multi-replicon, 9.73-Mbp genome shaped for versatility.</title>
        <authorList>
            <person name="Chain P.S.G."/>
            <person name="Denef V.J."/>
            <person name="Konstantinidis K.T."/>
            <person name="Vergez L.M."/>
            <person name="Agullo L."/>
            <person name="Reyes V.L."/>
            <person name="Hauser L."/>
            <person name="Cordova M."/>
            <person name="Gomez L."/>
            <person name="Gonzalez M."/>
            <person name="Land M."/>
            <person name="Lao V."/>
            <person name="Larimer F."/>
            <person name="LiPuma J.J."/>
            <person name="Mahenthiralingam E."/>
            <person name="Malfatti S.A."/>
            <person name="Marx C.J."/>
            <person name="Parnell J.J."/>
            <person name="Ramette A."/>
            <person name="Richardson P."/>
            <person name="Seeger M."/>
            <person name="Smith D."/>
            <person name="Spilker T."/>
            <person name="Sul W.J."/>
            <person name="Tsoi T.V."/>
            <person name="Ulrich L.E."/>
            <person name="Zhulin I.B."/>
            <person name="Tiedje J.M."/>
        </authorList>
    </citation>
    <scope>NUCLEOTIDE SEQUENCE [LARGE SCALE GENOMIC DNA]</scope>
    <source>
        <strain>LB400</strain>
    </source>
</reference>
<reference key="4">
    <citation type="journal article" date="2001" name="Biochemistry">
        <title>Characterization of BphF, a Rieske-type ferredoxin with a low reduction potential.</title>
        <authorList>
            <person name="Couture M.M.-J."/>
            <person name="Colbert C.L."/>
            <person name="Babini E."/>
            <person name="Rosell F.I."/>
            <person name="Mauk A.G."/>
            <person name="Bolin J.T."/>
            <person name="Eltis L.D."/>
        </authorList>
    </citation>
    <scope>CHARACTERIZATION</scope>
</reference>
<reference key="5">
    <citation type="journal article" date="2000" name="Structure">
        <title>A cluster exposed: structure of the Rieske ferredoxin from biphenyl dioxygenase and the redox properties of Rieske Fe-S proteins.</title>
        <authorList>
            <person name="Colbert C.L."/>
            <person name="Couture M.M.-J."/>
            <person name="Eltis L.D."/>
            <person name="Bolin J.T."/>
        </authorList>
    </citation>
    <scope>X-RAY CRYSTALLOGRAPHY (1.6 ANGSTROMS)</scope>
</reference>